<gene>
    <name type="primary">RFT1</name>
    <name type="ordered locus">CAALFM_CR04280CA</name>
    <name type="ORF">CaO19.516</name>
    <name type="ORF">CaO19.8147</name>
</gene>
<organism>
    <name type="scientific">Candida albicans (strain SC5314 / ATCC MYA-2876)</name>
    <name type="common">Yeast</name>
    <dbReference type="NCBI Taxonomy" id="237561"/>
    <lineage>
        <taxon>Eukaryota</taxon>
        <taxon>Fungi</taxon>
        <taxon>Dikarya</taxon>
        <taxon>Ascomycota</taxon>
        <taxon>Saccharomycotina</taxon>
        <taxon>Pichiomycetes</taxon>
        <taxon>Debaryomycetaceae</taxon>
        <taxon>Candida/Lodderomyces clade</taxon>
        <taxon>Candida</taxon>
    </lineage>
</organism>
<protein>
    <recommendedName>
        <fullName evidence="1">Man(5)GlcNAc(2)-PP-dolichol translocation protein RFT1</fullName>
    </recommendedName>
</protein>
<reference key="1">
    <citation type="journal article" date="2004" name="Proc. Natl. Acad. Sci. U.S.A.">
        <title>The diploid genome sequence of Candida albicans.</title>
        <authorList>
            <person name="Jones T."/>
            <person name="Federspiel N.A."/>
            <person name="Chibana H."/>
            <person name="Dungan J."/>
            <person name="Kalman S."/>
            <person name="Magee B.B."/>
            <person name="Newport G."/>
            <person name="Thorstenson Y.R."/>
            <person name="Agabian N."/>
            <person name="Magee P.T."/>
            <person name="Davis R.W."/>
            <person name="Scherer S."/>
        </authorList>
    </citation>
    <scope>NUCLEOTIDE SEQUENCE [LARGE SCALE GENOMIC DNA]</scope>
    <source>
        <strain>SC5314 / ATCC MYA-2876</strain>
    </source>
</reference>
<reference key="2">
    <citation type="journal article" date="2007" name="Genome Biol.">
        <title>Assembly of the Candida albicans genome into sixteen supercontigs aligned on the eight chromosomes.</title>
        <authorList>
            <person name="van het Hoog M."/>
            <person name="Rast T.J."/>
            <person name="Martchenko M."/>
            <person name="Grindle S."/>
            <person name="Dignard D."/>
            <person name="Hogues H."/>
            <person name="Cuomo C."/>
            <person name="Berriman M."/>
            <person name="Scherer S."/>
            <person name="Magee B.B."/>
            <person name="Whiteway M."/>
            <person name="Chibana H."/>
            <person name="Nantel A."/>
            <person name="Magee P.T."/>
        </authorList>
    </citation>
    <scope>GENOME REANNOTATION</scope>
    <source>
        <strain>SC5314 / ATCC MYA-2876</strain>
    </source>
</reference>
<reference key="3">
    <citation type="journal article" date="2013" name="Genome Biol.">
        <title>Assembly of a phased diploid Candida albicans genome facilitates allele-specific measurements and provides a simple model for repeat and indel structure.</title>
        <authorList>
            <person name="Muzzey D."/>
            <person name="Schwartz K."/>
            <person name="Weissman J.S."/>
            <person name="Sherlock G."/>
        </authorList>
    </citation>
    <scope>NUCLEOTIDE SEQUENCE [LARGE SCALE GENOMIC DNA]</scope>
    <scope>GENOME REANNOTATION</scope>
    <source>
        <strain>SC5314 / ATCC MYA-2876</strain>
    </source>
</reference>
<comment type="function">
    <text evidence="1">Intramembrane glycolipid transporter that operates in the biosynthetic pathway of dolichol-linked oligosaccharides, the glycan precursors employed in protein asparagine (N)-glycosylation. The sequential addition of sugars to dolichol pyrophosphate produces dolichol-linked oligosaccharides containing fourteen sugars, including two GlcNAcs, nine mannoses and three glucoses. Once assembled, the oligosaccharide is transferred from the lipid to nascent proteins by oligosaccharyltransferases. The assembly of dolichol-linked oligosaccharides begins on the cytosolic side of the endoplasmic reticulum membrane and finishes in its lumen. RFT1 could mediate the translocation of the cytosolically oriented intermediate DolPP-GlcNAc2Man5, produced by ALG11, into the ER lumen where dolichol-linked oligosaccharides assembly continues. However, the intramembrane lipid transporter activity could not be confirmed in vitro.</text>
</comment>
<comment type="pathway">
    <text evidence="1">Protein modification; protein glycosylation.</text>
</comment>
<comment type="subcellular location">
    <subcellularLocation>
        <location evidence="1">Endoplasmic reticulum membrane</location>
        <topology evidence="2">Multi-pass membrane protein</topology>
    </subcellularLocation>
</comment>
<comment type="similarity">
    <text evidence="3">Belongs to the RFT1 family.</text>
</comment>
<keyword id="KW-0256">Endoplasmic reticulum</keyword>
<keyword id="KW-0472">Membrane</keyword>
<keyword id="KW-1185">Reference proteome</keyword>
<keyword id="KW-0762">Sugar transport</keyword>
<keyword id="KW-0812">Transmembrane</keyword>
<keyword id="KW-1133">Transmembrane helix</keyword>
<keyword id="KW-0813">Transport</keyword>
<feature type="chain" id="PRO_0000212415" description="Man(5)GlcNAc(2)-PP-dolichol translocation protein RFT1">
    <location>
        <begin position="1"/>
        <end position="561"/>
    </location>
</feature>
<feature type="transmembrane region" description="Helical" evidence="2">
    <location>
        <begin position="25"/>
        <end position="45"/>
    </location>
</feature>
<feature type="transmembrane region" description="Helical" evidence="2">
    <location>
        <begin position="49"/>
        <end position="69"/>
    </location>
</feature>
<feature type="transmembrane region" description="Helical" evidence="2">
    <location>
        <begin position="95"/>
        <end position="115"/>
    </location>
</feature>
<feature type="transmembrane region" description="Helical" evidence="2">
    <location>
        <begin position="136"/>
        <end position="156"/>
    </location>
</feature>
<feature type="transmembrane region" description="Helical" evidence="2">
    <location>
        <begin position="168"/>
        <end position="188"/>
    </location>
</feature>
<feature type="transmembrane region" description="Helical" evidence="2">
    <location>
        <begin position="199"/>
        <end position="219"/>
    </location>
</feature>
<feature type="transmembrane region" description="Helical" evidence="2">
    <location>
        <begin position="350"/>
        <end position="370"/>
    </location>
</feature>
<feature type="transmembrane region" description="Helical" evidence="2">
    <location>
        <begin position="398"/>
        <end position="418"/>
    </location>
</feature>
<feature type="transmembrane region" description="Helical" evidence="2">
    <location>
        <begin position="429"/>
        <end position="449"/>
    </location>
</feature>
<feature type="transmembrane region" description="Helical" evidence="2">
    <location>
        <begin position="452"/>
        <end position="469"/>
    </location>
</feature>
<feature type="transmembrane region" description="Helical" evidence="2">
    <location>
        <begin position="493"/>
        <end position="513"/>
    </location>
</feature>
<feature type="transmembrane region" description="Helical" evidence="2">
    <location>
        <begin position="519"/>
        <end position="539"/>
    </location>
</feature>
<accession>Q5A6N8</accession>
<accession>A0A1D8PSP3</accession>
<dbReference type="EMBL" id="CP017630">
    <property type="protein sequence ID" value="AOW31166.1"/>
    <property type="molecule type" value="Genomic_DNA"/>
</dbReference>
<dbReference type="RefSeq" id="XP_717379.1">
    <property type="nucleotide sequence ID" value="XM_712286.1"/>
</dbReference>
<dbReference type="FunCoup" id="Q5A6N8">
    <property type="interactions" value="713"/>
</dbReference>
<dbReference type="STRING" id="237561.Q5A6N8"/>
<dbReference type="EnsemblFungi" id="CR_04280C_A-T">
    <property type="protein sequence ID" value="CR_04280C_A-T-p1"/>
    <property type="gene ID" value="CR_04280C_A"/>
</dbReference>
<dbReference type="GeneID" id="3640993"/>
<dbReference type="KEGG" id="cal:CAALFM_CR04280CA"/>
<dbReference type="CGD" id="CAL0000185017">
    <property type="gene designation" value="orf19.8147"/>
</dbReference>
<dbReference type="VEuPathDB" id="FungiDB:CR_04280C_A"/>
<dbReference type="eggNOG" id="KOG2864">
    <property type="taxonomic scope" value="Eukaryota"/>
</dbReference>
<dbReference type="HOGENOM" id="CLU_023360_3_0_1"/>
<dbReference type="InParanoid" id="Q5A6N8"/>
<dbReference type="OrthoDB" id="9979195at2759"/>
<dbReference type="UniPathway" id="UPA00378"/>
<dbReference type="PRO" id="PR:Q5A6N8"/>
<dbReference type="Proteomes" id="UP000000559">
    <property type="component" value="Chromosome R"/>
</dbReference>
<dbReference type="GO" id="GO:0005789">
    <property type="term" value="C:endoplasmic reticulum membrane"/>
    <property type="evidence" value="ECO:0000318"/>
    <property type="project" value="GO_Central"/>
</dbReference>
<dbReference type="GO" id="GO:0140327">
    <property type="term" value="F:flippase activity"/>
    <property type="evidence" value="ECO:0007669"/>
    <property type="project" value="EnsemblFungi"/>
</dbReference>
<dbReference type="GO" id="GO:0006488">
    <property type="term" value="P:dolichol-linked oligosaccharide biosynthetic process"/>
    <property type="evidence" value="ECO:0000250"/>
    <property type="project" value="UniProtKB"/>
</dbReference>
<dbReference type="GO" id="GO:0034203">
    <property type="term" value="P:glycolipid translocation"/>
    <property type="evidence" value="ECO:0000250"/>
    <property type="project" value="UniProtKB"/>
</dbReference>
<dbReference type="GO" id="GO:0006487">
    <property type="term" value="P:protein N-linked glycosylation"/>
    <property type="evidence" value="ECO:0000250"/>
    <property type="project" value="UniProtKB"/>
</dbReference>
<dbReference type="InterPro" id="IPR007594">
    <property type="entry name" value="RFT1"/>
</dbReference>
<dbReference type="PANTHER" id="PTHR13117">
    <property type="entry name" value="ENDOPLASMIC RETICULUM MULTISPAN TRANSMEMBRANE PROTEIN-RELATED"/>
    <property type="match status" value="1"/>
</dbReference>
<dbReference type="PANTHER" id="PTHR13117:SF5">
    <property type="entry name" value="PROTEIN RFT1 HOMOLOG"/>
    <property type="match status" value="1"/>
</dbReference>
<dbReference type="Pfam" id="PF04506">
    <property type="entry name" value="Rft-1"/>
    <property type="match status" value="1"/>
</dbReference>
<evidence type="ECO:0000250" key="1">
    <source>
        <dbReference type="UniProtKB" id="P38206"/>
    </source>
</evidence>
<evidence type="ECO:0000255" key="2"/>
<evidence type="ECO:0000305" key="3"/>
<proteinExistence type="inferred from homology"/>
<sequence>MSVSSSKQPGNDANDANSSVKGVSHLIIVQIIAKLLTFVLNQLIIRYLSPSIIGVTTYLEFICSTILFFSRESIRLSVQRVRNNSDNKDYVAQKVVNFGILAIAFAFPIFMVIGYWQLNYSSVMDKLFVSPFYKPVIVLFVASVILELLVEPIYCLYQFQLDFGKRSKFEGSAIFVKCIVSVLSILLARQYFVDQKFEGVAICAFALAQFSYSLTLFACYLMSFRFEFQNNKINYNLVKLKDENAREFYFEQDTLTIVKGFFVQMIFKQFLTEGDKLLISHLCTIEEQGMYAVMANYGSIIARLLFQPLEESTRLMFTKLLNENTRSQGDEKPQKSESHKCMQTFNYLKLISIFYFNLSLIILFAGVTSGPYLLKLLMGGRASNWESTDIFKLFPQYVVYLPFLAFNGILEALFSSMATNSDLKNFSKFMTLITILVLIFSYLLIDVLNLRISGLILANVFNMSSRIGYCYFKISKFYSKENVKVSFVDIVRYSCPSILITSIIWIIQLFIIGKNTTNFVQLILNACFSFVLVIILMVMERKNSKKPFEKVTNKFMKPKLD</sequence>
<name>RFT1_CANAL</name>